<feature type="signal peptide" evidence="2">
    <location>
        <begin position="1"/>
        <end position="20"/>
    </location>
</feature>
<feature type="propeptide" id="PRO_0000028622" description="Activation peptide" evidence="2">
    <location>
        <begin position="21"/>
        <end status="unknown"/>
    </location>
</feature>
<feature type="chain" id="PRO_0000028623" description="Extracellular metalloprotease">
    <location>
        <begin status="unknown"/>
        <end position="347"/>
    </location>
</feature>
<feature type="region of interest" description="Disordered" evidence="4">
    <location>
        <begin position="43"/>
        <end position="68"/>
    </location>
</feature>
<feature type="active site" evidence="3">
    <location>
        <position position="163"/>
    </location>
</feature>
<feature type="active site" description="Proton donor" evidence="3">
    <location>
        <position position="264"/>
    </location>
</feature>
<feature type="binding site" evidence="3">
    <location>
        <position position="162"/>
    </location>
    <ligand>
        <name>Zn(2+)</name>
        <dbReference type="ChEBI" id="CHEBI:29105"/>
        <note>catalytic</note>
    </ligand>
</feature>
<feature type="binding site" evidence="3">
    <location>
        <position position="166"/>
    </location>
    <ligand>
        <name>Zn(2+)</name>
        <dbReference type="ChEBI" id="CHEBI:29105"/>
        <note>catalytic</note>
    </ligand>
</feature>
<feature type="binding site" evidence="3">
    <location>
        <position position="186"/>
    </location>
    <ligand>
        <name>Zn(2+)</name>
        <dbReference type="ChEBI" id="CHEBI:29105"/>
        <note>catalytic</note>
    </ligand>
</feature>
<name>PRT1_PECCC</name>
<protein>
    <recommendedName>
        <fullName>Extracellular metalloprotease</fullName>
        <ecNumber>3.4.24.-</ecNumber>
    </recommendedName>
</protein>
<accession>Q99132</accession>
<sequence>MKSRPICSVIPPYILHRIIANGTDEQRHCAQQTLMHVQSLMVSHHPRPEPHEKLPAGQANRSIHDAEQQQQLPGKLVRAEGQPSNGDIAVDEAYSYLGVTYDFFWKIFQRNSLDAEGLPLAGTVHYGQDYQNAFWNGQQMVFGDGDGKIFNRFTIALDVVAHELTHGITENEAGLIYFRQSGALNESLSDVFGSMVKQYHLGQTTEQADWLIGAELLADGIHGMGLRSMSHPGTAYDDELLGIDPQPSHMNEYVNTREDNGGVHLNSGIPNRAFYLAAIALGGHSWEKAGRIWYDTLCDKTLPQNADFEIFARHTIQHAAKRFNHTVADIVQQSWETVGVEVRQEFL</sequence>
<comment type="cofactor">
    <cofactor evidence="1">
        <name>Ca(2+)</name>
        <dbReference type="ChEBI" id="CHEBI:29108"/>
    </cofactor>
    <text evidence="1">Binds 1 Ca(2+) ion per subunit.</text>
</comment>
<comment type="cofactor">
    <cofactor evidence="1">
        <name>Zn(2+)</name>
        <dbReference type="ChEBI" id="CHEBI:29105"/>
    </cofactor>
    <text evidence="1">Binds 1 zinc ion per subunit.</text>
</comment>
<comment type="subcellular location">
    <subcellularLocation>
        <location>Secreted</location>
    </subcellularLocation>
</comment>
<comment type="similarity">
    <text evidence="5">Belongs to the peptidase M4 family.</text>
</comment>
<evidence type="ECO:0000250" key="1"/>
<evidence type="ECO:0000255" key="2"/>
<evidence type="ECO:0000255" key="3">
    <source>
        <dbReference type="PROSITE-ProRule" id="PRU10095"/>
    </source>
</evidence>
<evidence type="ECO:0000256" key="4">
    <source>
        <dbReference type="SAM" id="MobiDB-lite"/>
    </source>
</evidence>
<evidence type="ECO:0000305" key="5"/>
<gene>
    <name type="primary">prt1</name>
</gene>
<reference key="1">
    <citation type="journal article" date="1991" name="J. Bacteriol.">
        <title>Erwinia carotovora subsp. carotovora extracellular protease: characterization and nucleotide sequence of the gene.</title>
        <authorList>
            <person name="Kyoestioe S.R.M."/>
            <person name="Cramer C.L."/>
            <person name="Lacy G.H."/>
        </authorList>
    </citation>
    <scope>NUCLEOTIDE SEQUENCE [GENOMIC DNA]</scope>
    <source>
        <strain>EC14</strain>
    </source>
</reference>
<dbReference type="EC" id="3.4.24.-"/>
<dbReference type="EMBL" id="M36651">
    <property type="protein sequence ID" value="AAA24858.1"/>
    <property type="molecule type" value="Genomic_DNA"/>
</dbReference>
<dbReference type="PIR" id="A41048">
    <property type="entry name" value="A41048"/>
</dbReference>
<dbReference type="SMR" id="Q99132"/>
<dbReference type="MEROPS" id="M04.027"/>
<dbReference type="GO" id="GO:0005576">
    <property type="term" value="C:extracellular region"/>
    <property type="evidence" value="ECO:0007669"/>
    <property type="project" value="UniProtKB-SubCell"/>
</dbReference>
<dbReference type="GO" id="GO:0046872">
    <property type="term" value="F:metal ion binding"/>
    <property type="evidence" value="ECO:0007669"/>
    <property type="project" value="UniProtKB-KW"/>
</dbReference>
<dbReference type="GO" id="GO:0004222">
    <property type="term" value="F:metalloendopeptidase activity"/>
    <property type="evidence" value="ECO:0007669"/>
    <property type="project" value="InterPro"/>
</dbReference>
<dbReference type="GO" id="GO:0006508">
    <property type="term" value="P:proteolysis"/>
    <property type="evidence" value="ECO:0007669"/>
    <property type="project" value="UniProtKB-KW"/>
</dbReference>
<dbReference type="CDD" id="cd09597">
    <property type="entry name" value="M4_TLP"/>
    <property type="match status" value="1"/>
</dbReference>
<dbReference type="Gene3D" id="3.10.170.10">
    <property type="match status" value="1"/>
</dbReference>
<dbReference type="Gene3D" id="1.10.390.10">
    <property type="entry name" value="Neutral Protease Domain 2"/>
    <property type="match status" value="1"/>
</dbReference>
<dbReference type="InterPro" id="IPR052759">
    <property type="entry name" value="Metalloprotease_M4"/>
</dbReference>
<dbReference type="InterPro" id="IPR023612">
    <property type="entry name" value="Peptidase_M4"/>
</dbReference>
<dbReference type="InterPro" id="IPR027268">
    <property type="entry name" value="Peptidase_M4/M1_CTD_sf"/>
</dbReference>
<dbReference type="InterPro" id="IPR001570">
    <property type="entry name" value="Peptidase_M4_C_domain"/>
</dbReference>
<dbReference type="InterPro" id="IPR013856">
    <property type="entry name" value="Peptidase_M4_domain"/>
</dbReference>
<dbReference type="InterPro" id="IPR032475">
    <property type="entry name" value="Protealysin_N_PP"/>
</dbReference>
<dbReference type="PANTHER" id="PTHR43579">
    <property type="match status" value="1"/>
</dbReference>
<dbReference type="PANTHER" id="PTHR43579:SF1">
    <property type="entry name" value="NEUTRAL METALLOPROTEINASE"/>
    <property type="match status" value="1"/>
</dbReference>
<dbReference type="Pfam" id="PF01447">
    <property type="entry name" value="Peptidase_M4"/>
    <property type="match status" value="1"/>
</dbReference>
<dbReference type="Pfam" id="PF02868">
    <property type="entry name" value="Peptidase_M4_C"/>
    <property type="match status" value="1"/>
</dbReference>
<dbReference type="Pfam" id="PF16485">
    <property type="entry name" value="PLN_propep"/>
    <property type="match status" value="1"/>
</dbReference>
<dbReference type="PRINTS" id="PR00730">
    <property type="entry name" value="THERMOLYSIN"/>
</dbReference>
<dbReference type="SUPFAM" id="SSF55486">
    <property type="entry name" value="Metalloproteases ('zincins'), catalytic domain"/>
    <property type="match status" value="1"/>
</dbReference>
<dbReference type="PROSITE" id="PS00142">
    <property type="entry name" value="ZINC_PROTEASE"/>
    <property type="match status" value="1"/>
</dbReference>
<organism>
    <name type="scientific">Pectobacterium carotovorum subsp. carotovorum</name>
    <name type="common">Erwinia carotovora subsp. carotovora</name>
    <dbReference type="NCBI Taxonomy" id="555"/>
    <lineage>
        <taxon>Bacteria</taxon>
        <taxon>Pseudomonadati</taxon>
        <taxon>Pseudomonadota</taxon>
        <taxon>Gammaproteobacteria</taxon>
        <taxon>Enterobacterales</taxon>
        <taxon>Pectobacteriaceae</taxon>
        <taxon>Pectobacterium</taxon>
    </lineage>
</organism>
<proteinExistence type="inferred from homology"/>
<keyword id="KW-0106">Calcium</keyword>
<keyword id="KW-0378">Hydrolase</keyword>
<keyword id="KW-0479">Metal-binding</keyword>
<keyword id="KW-0482">Metalloprotease</keyword>
<keyword id="KW-0645">Protease</keyword>
<keyword id="KW-0964">Secreted</keyword>
<keyword id="KW-0732">Signal</keyword>
<keyword id="KW-0862">Zinc</keyword>
<keyword id="KW-0865">Zymogen</keyword>